<comment type="function">
    <text evidence="1">Catalyzes the NADPH-dependent reduction of 7-cyano-7-deazaguanine (preQ0) to 7-aminomethyl-7-deazaguanine (preQ1).</text>
</comment>
<comment type="catalytic activity">
    <reaction evidence="1">
        <text>7-aminomethyl-7-carbaguanine + 2 NADP(+) = 7-cyano-7-deazaguanine + 2 NADPH + 3 H(+)</text>
        <dbReference type="Rhea" id="RHEA:13409"/>
        <dbReference type="ChEBI" id="CHEBI:15378"/>
        <dbReference type="ChEBI" id="CHEBI:45075"/>
        <dbReference type="ChEBI" id="CHEBI:57783"/>
        <dbReference type="ChEBI" id="CHEBI:58349"/>
        <dbReference type="ChEBI" id="CHEBI:58703"/>
        <dbReference type="EC" id="1.7.1.13"/>
    </reaction>
</comment>
<comment type="pathway">
    <text evidence="1">tRNA modification; tRNA-queuosine biosynthesis.</text>
</comment>
<comment type="subunit">
    <text evidence="1">Homodimer.</text>
</comment>
<comment type="subcellular location">
    <subcellularLocation>
        <location evidence="1">Cytoplasm</location>
    </subcellularLocation>
</comment>
<comment type="similarity">
    <text evidence="1">Belongs to the GTP cyclohydrolase I family. QueF type 2 subfamily.</text>
</comment>
<gene>
    <name evidence="1" type="primary">queF</name>
    <name type="ordered locus">VIBHAR_01193</name>
</gene>
<evidence type="ECO:0000255" key="1">
    <source>
        <dbReference type="HAMAP-Rule" id="MF_00817"/>
    </source>
</evidence>
<evidence type="ECO:0000256" key="2">
    <source>
        <dbReference type="SAM" id="MobiDB-lite"/>
    </source>
</evidence>
<proteinExistence type="inferred from homology"/>
<organism>
    <name type="scientific">Vibrio campbellii (strain ATCC BAA-1116)</name>
    <dbReference type="NCBI Taxonomy" id="2902295"/>
    <lineage>
        <taxon>Bacteria</taxon>
        <taxon>Pseudomonadati</taxon>
        <taxon>Pseudomonadota</taxon>
        <taxon>Gammaproteobacteria</taxon>
        <taxon>Vibrionales</taxon>
        <taxon>Vibrionaceae</taxon>
        <taxon>Vibrio</taxon>
    </lineage>
</organism>
<protein>
    <recommendedName>
        <fullName evidence="1">NADPH-dependent 7-cyano-7-deazaguanine reductase</fullName>
        <ecNumber evidence="1">1.7.1.13</ecNumber>
    </recommendedName>
    <alternativeName>
        <fullName evidence="1">7-cyano-7-carbaguanine reductase</fullName>
    </alternativeName>
    <alternativeName>
        <fullName evidence="1">NADPH-dependent nitrile oxidoreductase</fullName>
    </alternativeName>
    <alternativeName>
        <fullName evidence="1">PreQ(0) reductase</fullName>
    </alternativeName>
</protein>
<keyword id="KW-0963">Cytoplasm</keyword>
<keyword id="KW-0521">NADP</keyword>
<keyword id="KW-0560">Oxidoreductase</keyword>
<keyword id="KW-0671">Queuosine biosynthesis</keyword>
<name>QUEF_VIBC1</name>
<accession>A7MYB6</accession>
<sequence>MSKYSDAKELAGLTLGKKTEYANQYDASLLQPVPRSLNRDDLELGDSLPFLGHDIWTLYELSWLNSKGLPQVAVGEVYIPATSANLIESKSFKLYLNSYNQTRFATWEEVTERLTQDLSACAGEAVLVEVNPVNHYTNQPIVTMEGECIDDQDIEITSYDFNAALLEGAAGDEQVEEILHSHLLKSNCLITNQPDWGSVEIRYQGAKLDREKLLRYLVSFREHNEFHEQCVERIFTDLMKYCQPTKLTVFARYTRRGGLDINPYRSTEQDKPAHNNRMARQ</sequence>
<feature type="chain" id="PRO_1000062367" description="NADPH-dependent 7-cyano-7-deazaguanine reductase">
    <location>
        <begin position="1"/>
        <end position="281"/>
    </location>
</feature>
<feature type="region of interest" description="Disordered" evidence="2">
    <location>
        <begin position="261"/>
        <end position="281"/>
    </location>
</feature>
<feature type="active site" description="Thioimide intermediate" evidence="1">
    <location>
        <position position="188"/>
    </location>
</feature>
<feature type="active site" description="Proton donor" evidence="1">
    <location>
        <position position="195"/>
    </location>
</feature>
<feature type="binding site" evidence="1">
    <location>
        <begin position="87"/>
        <end position="89"/>
    </location>
    <ligand>
        <name>substrate</name>
    </ligand>
</feature>
<feature type="binding site" evidence="1">
    <location>
        <begin position="89"/>
        <end position="90"/>
    </location>
    <ligand>
        <name>NADPH</name>
        <dbReference type="ChEBI" id="CHEBI:57783"/>
    </ligand>
</feature>
<feature type="binding site" evidence="1">
    <location>
        <begin position="227"/>
        <end position="228"/>
    </location>
    <ligand>
        <name>substrate</name>
    </ligand>
</feature>
<feature type="binding site" evidence="1">
    <location>
        <begin position="256"/>
        <end position="257"/>
    </location>
    <ligand>
        <name>NADPH</name>
        <dbReference type="ChEBI" id="CHEBI:57783"/>
    </ligand>
</feature>
<reference key="1">
    <citation type="submission" date="2007-08" db="EMBL/GenBank/DDBJ databases">
        <authorList>
            <consortium name="The Vibrio harveyi Genome Sequencing Project"/>
            <person name="Bassler B."/>
            <person name="Clifton S.W."/>
            <person name="Fulton L."/>
            <person name="Delehaunty K."/>
            <person name="Fronick C."/>
            <person name="Harrison M."/>
            <person name="Markivic C."/>
            <person name="Fulton R."/>
            <person name="Tin-Wollam A.-M."/>
            <person name="Shah N."/>
            <person name="Pepin K."/>
            <person name="Nash W."/>
            <person name="Thiruvilangam P."/>
            <person name="Bhonagiri V."/>
            <person name="Waters C."/>
            <person name="Tu K.C."/>
            <person name="Irgon J."/>
            <person name="Wilson R.K."/>
        </authorList>
    </citation>
    <scope>NUCLEOTIDE SEQUENCE [LARGE SCALE GENOMIC DNA]</scope>
    <source>
        <strain>ATCC BAA-1116 / BB120</strain>
    </source>
</reference>
<dbReference type="EC" id="1.7.1.13" evidence="1"/>
<dbReference type="EMBL" id="CP000789">
    <property type="protein sequence ID" value="ABU70182.1"/>
    <property type="molecule type" value="Genomic_DNA"/>
</dbReference>
<dbReference type="RefSeq" id="WP_010648239.1">
    <property type="nucleotide sequence ID" value="NC_022269.1"/>
</dbReference>
<dbReference type="SMR" id="A7MYB6"/>
<dbReference type="KEGG" id="vha:VIBHAR_01193"/>
<dbReference type="PATRIC" id="fig|338187.25.peg.1437"/>
<dbReference type="UniPathway" id="UPA00392"/>
<dbReference type="Proteomes" id="UP000008152">
    <property type="component" value="Chromosome I"/>
</dbReference>
<dbReference type="GO" id="GO:0005737">
    <property type="term" value="C:cytoplasm"/>
    <property type="evidence" value="ECO:0007669"/>
    <property type="project" value="UniProtKB-SubCell"/>
</dbReference>
<dbReference type="GO" id="GO:0033739">
    <property type="term" value="F:preQ1 synthase activity"/>
    <property type="evidence" value="ECO:0007669"/>
    <property type="project" value="UniProtKB-UniRule"/>
</dbReference>
<dbReference type="GO" id="GO:0008616">
    <property type="term" value="P:queuosine biosynthetic process"/>
    <property type="evidence" value="ECO:0007669"/>
    <property type="project" value="UniProtKB-UniRule"/>
</dbReference>
<dbReference type="GO" id="GO:0006400">
    <property type="term" value="P:tRNA modification"/>
    <property type="evidence" value="ECO:0007669"/>
    <property type="project" value="UniProtKB-UniRule"/>
</dbReference>
<dbReference type="Gene3D" id="3.30.1130.10">
    <property type="match status" value="2"/>
</dbReference>
<dbReference type="HAMAP" id="MF_00817">
    <property type="entry name" value="QueF_type2"/>
    <property type="match status" value="1"/>
</dbReference>
<dbReference type="InterPro" id="IPR043133">
    <property type="entry name" value="GTP-CH-I_C/QueF"/>
</dbReference>
<dbReference type="InterPro" id="IPR050084">
    <property type="entry name" value="NADPH_dep_7-cyano-7-deazaG_red"/>
</dbReference>
<dbReference type="InterPro" id="IPR029500">
    <property type="entry name" value="QueF"/>
</dbReference>
<dbReference type="InterPro" id="IPR029139">
    <property type="entry name" value="QueF_N"/>
</dbReference>
<dbReference type="InterPro" id="IPR016428">
    <property type="entry name" value="QueF_type2"/>
</dbReference>
<dbReference type="NCBIfam" id="TIGR03138">
    <property type="entry name" value="QueF"/>
    <property type="match status" value="1"/>
</dbReference>
<dbReference type="PANTHER" id="PTHR34354">
    <property type="entry name" value="NADPH-DEPENDENT 7-CYANO-7-DEAZAGUANINE REDUCTASE"/>
    <property type="match status" value="1"/>
</dbReference>
<dbReference type="PANTHER" id="PTHR34354:SF1">
    <property type="entry name" value="NADPH-DEPENDENT 7-CYANO-7-DEAZAGUANINE REDUCTASE"/>
    <property type="match status" value="1"/>
</dbReference>
<dbReference type="Pfam" id="PF14489">
    <property type="entry name" value="QueF"/>
    <property type="match status" value="1"/>
</dbReference>
<dbReference type="Pfam" id="PF14819">
    <property type="entry name" value="QueF_N"/>
    <property type="match status" value="1"/>
</dbReference>
<dbReference type="PIRSF" id="PIRSF004750">
    <property type="entry name" value="Nitrile_oxidored_YqcD_prd"/>
    <property type="match status" value="1"/>
</dbReference>
<dbReference type="SUPFAM" id="SSF55620">
    <property type="entry name" value="Tetrahydrobiopterin biosynthesis enzymes-like"/>
    <property type="match status" value="1"/>
</dbReference>